<keyword id="KW-0472">Membrane</keyword>
<keyword id="KW-0496">Mitochondrion</keyword>
<keyword id="KW-0999">Mitochondrion inner membrane</keyword>
<keyword id="KW-0539">Nucleus</keyword>
<keyword id="KW-1185">Reference proteome</keyword>
<proteinExistence type="evidence at transcript level"/>
<dbReference type="EMBL" id="BC076703">
    <property type="protein sequence ID" value="AAH76703.1"/>
    <property type="molecule type" value="mRNA"/>
</dbReference>
<dbReference type="RefSeq" id="NP_001005023.1">
    <property type="nucleotide sequence ID" value="NM_001005023.1"/>
</dbReference>
<dbReference type="RefSeq" id="XP_012816320.1">
    <property type="nucleotide sequence ID" value="XM_012960866.3"/>
</dbReference>
<dbReference type="SMR" id="Q6DFN1"/>
<dbReference type="FunCoup" id="Q6DFN1">
    <property type="interactions" value="1521"/>
</dbReference>
<dbReference type="STRING" id="8364.ENSXETP00000041425"/>
<dbReference type="PaxDb" id="8364-ENSXETP00000053281"/>
<dbReference type="GeneID" id="448535"/>
<dbReference type="KEGG" id="xtr:448535"/>
<dbReference type="AGR" id="Xenbase:XB-GENE-999944"/>
<dbReference type="CTD" id="25915"/>
<dbReference type="Xenbase" id="XB-GENE-999944">
    <property type="gene designation" value="ndufaf3"/>
</dbReference>
<dbReference type="eggNOG" id="KOG3363">
    <property type="taxonomic scope" value="Eukaryota"/>
</dbReference>
<dbReference type="HOGENOM" id="CLU_074390_3_1_1"/>
<dbReference type="InParanoid" id="Q6DFN1"/>
<dbReference type="OMA" id="FSKAYDH"/>
<dbReference type="OrthoDB" id="20681at2759"/>
<dbReference type="PhylomeDB" id="Q6DFN1"/>
<dbReference type="TreeFam" id="TF321072"/>
<dbReference type="Reactome" id="R-XTR-6799198">
    <property type="pathway name" value="Complex I biogenesis"/>
</dbReference>
<dbReference type="Proteomes" id="UP000008143">
    <property type="component" value="Chromosome 4"/>
</dbReference>
<dbReference type="Bgee" id="ENSXETG00000024755">
    <property type="expression patterns" value="Expressed in egg cell and 12 other cell types or tissues"/>
</dbReference>
<dbReference type="GO" id="GO:0005743">
    <property type="term" value="C:mitochondrial inner membrane"/>
    <property type="evidence" value="ECO:0007669"/>
    <property type="project" value="UniProtKB-SubCell"/>
</dbReference>
<dbReference type="GO" id="GO:0005634">
    <property type="term" value="C:nucleus"/>
    <property type="evidence" value="ECO:0007669"/>
    <property type="project" value="UniProtKB-SubCell"/>
</dbReference>
<dbReference type="GO" id="GO:0032981">
    <property type="term" value="P:mitochondrial respiratory chain complex I assembly"/>
    <property type="evidence" value="ECO:0007669"/>
    <property type="project" value="InterPro"/>
</dbReference>
<dbReference type="CDD" id="cd05125">
    <property type="entry name" value="Mth938_2P1-like"/>
    <property type="match status" value="1"/>
</dbReference>
<dbReference type="FunFam" id="3.40.1230.10:FF:000002">
    <property type="entry name" value="NADH dehydrogenase [ubiquinone] 1 alpha subcomplex assembly factor 3"/>
    <property type="match status" value="1"/>
</dbReference>
<dbReference type="Gene3D" id="3.40.1230.10">
    <property type="entry name" value="MTH938-like"/>
    <property type="match status" value="1"/>
</dbReference>
<dbReference type="InterPro" id="IPR036748">
    <property type="entry name" value="MTH938-like_sf"/>
</dbReference>
<dbReference type="InterPro" id="IPR034095">
    <property type="entry name" value="NDUF3"/>
</dbReference>
<dbReference type="InterPro" id="IPR007523">
    <property type="entry name" value="NDUFAF3/AAMDC"/>
</dbReference>
<dbReference type="PANTHER" id="PTHR21192:SF2">
    <property type="entry name" value="NADH DEHYDROGENASE [UBIQUINONE] 1 ALPHA SUBCOMPLEX ASSEMBLY FACTOR 3"/>
    <property type="match status" value="1"/>
</dbReference>
<dbReference type="PANTHER" id="PTHR21192">
    <property type="entry name" value="NUCLEAR PROTEIN E3-3"/>
    <property type="match status" value="1"/>
</dbReference>
<dbReference type="Pfam" id="PF04430">
    <property type="entry name" value="DUF498"/>
    <property type="match status" value="1"/>
</dbReference>
<dbReference type="SUPFAM" id="SSF64076">
    <property type="entry name" value="MTH938-like"/>
    <property type="match status" value="1"/>
</dbReference>
<name>NDUF3_XENTR</name>
<evidence type="ECO:0000250" key="1"/>
<evidence type="ECO:0000305" key="2"/>
<sequence>MALSAALRLQSLRSLAPHCKLFASALQSHTQQPCRSHRLAPTDDELYQRTTVTRLERDSAEFMFIETYSSQGFIINGDKVVGPCAVIPKAILQWNVGSYKDINLESLSLFHMLSPRIEILVVGTGDRVERLDPNILKFMRQKGVAVEVQDTANACATFNFLVSERRITAAALIPPQLVPKDPL</sequence>
<protein>
    <recommendedName>
        <fullName>NADH dehydrogenase [ubiquinone] 1 alpha subcomplex assembly factor 3</fullName>
    </recommendedName>
</protein>
<organism>
    <name type="scientific">Xenopus tropicalis</name>
    <name type="common">Western clawed frog</name>
    <name type="synonym">Silurana tropicalis</name>
    <dbReference type="NCBI Taxonomy" id="8364"/>
    <lineage>
        <taxon>Eukaryota</taxon>
        <taxon>Metazoa</taxon>
        <taxon>Chordata</taxon>
        <taxon>Craniata</taxon>
        <taxon>Vertebrata</taxon>
        <taxon>Euteleostomi</taxon>
        <taxon>Amphibia</taxon>
        <taxon>Batrachia</taxon>
        <taxon>Anura</taxon>
        <taxon>Pipoidea</taxon>
        <taxon>Pipidae</taxon>
        <taxon>Xenopodinae</taxon>
        <taxon>Xenopus</taxon>
        <taxon>Silurana</taxon>
    </lineage>
</organism>
<feature type="chain" id="PRO_0000281157" description="NADH dehydrogenase [ubiquinone] 1 alpha subcomplex assembly factor 3">
    <location>
        <begin position="1"/>
        <end position="183"/>
    </location>
</feature>
<accession>Q6DFN1</accession>
<reference key="1">
    <citation type="submission" date="2004-07" db="EMBL/GenBank/DDBJ databases">
        <authorList>
            <consortium name="NIH - Xenopus Gene Collection (XGC) project"/>
        </authorList>
    </citation>
    <scope>NUCLEOTIDE SEQUENCE [LARGE SCALE MRNA]</scope>
    <source>
        <tissue>Embryo</tissue>
    </source>
</reference>
<gene>
    <name type="primary">ndufaf3</name>
</gene>
<comment type="function">
    <text evidence="1">Essential factor for the assembly of mitochondrial NADH:ubiquinone oxidoreductase complex (complex I).</text>
</comment>
<comment type="subcellular location">
    <subcellularLocation>
        <location evidence="1">Nucleus</location>
    </subcellularLocation>
    <subcellularLocation>
        <location evidence="1">Mitochondrion inner membrane</location>
    </subcellularLocation>
</comment>
<comment type="similarity">
    <text evidence="2">Belongs to the NDUFAF3 family.</text>
</comment>